<keyword id="KW-0997">Cell inner membrane</keyword>
<keyword id="KW-1003">Cell membrane</keyword>
<keyword id="KW-0472">Membrane</keyword>
<keyword id="KW-0520">NAD</keyword>
<keyword id="KW-0874">Quinone</keyword>
<keyword id="KW-1185">Reference proteome</keyword>
<keyword id="KW-1278">Translocase</keyword>
<keyword id="KW-0812">Transmembrane</keyword>
<keyword id="KW-1133">Transmembrane helix</keyword>
<keyword id="KW-0813">Transport</keyword>
<keyword id="KW-0830">Ubiquinone</keyword>
<proteinExistence type="inferred from homology"/>
<evidence type="ECO:0000255" key="1">
    <source>
        <dbReference type="HAMAP-Rule" id="MF_01456"/>
    </source>
</evidence>
<organism>
    <name type="scientific">Geotalea daltonii (strain DSM 22248 / JCM 15807 / FRC-32)</name>
    <name type="common">Geobacter daltonii</name>
    <dbReference type="NCBI Taxonomy" id="316067"/>
    <lineage>
        <taxon>Bacteria</taxon>
        <taxon>Pseudomonadati</taxon>
        <taxon>Thermodesulfobacteriota</taxon>
        <taxon>Desulfuromonadia</taxon>
        <taxon>Geobacterales</taxon>
        <taxon>Geobacteraceae</taxon>
        <taxon>Geotalea</taxon>
    </lineage>
</organism>
<name>NUOK1_GEODF</name>
<feature type="chain" id="PRO_0000390079" description="NADH-quinone oxidoreductase subunit K 1">
    <location>
        <begin position="1"/>
        <end position="100"/>
    </location>
</feature>
<feature type="transmembrane region" description="Helical" evidence="1">
    <location>
        <begin position="4"/>
        <end position="24"/>
    </location>
</feature>
<feature type="transmembrane region" description="Helical" evidence="1">
    <location>
        <begin position="29"/>
        <end position="49"/>
    </location>
</feature>
<feature type="transmembrane region" description="Helical" evidence="1">
    <location>
        <begin position="60"/>
        <end position="80"/>
    </location>
</feature>
<comment type="function">
    <text evidence="1">NDH-1 shuttles electrons from NADH, via FMN and iron-sulfur (Fe-S) centers, to quinones in the respiratory chain. The immediate electron acceptor for the enzyme in this species is believed to be ubiquinone. Couples the redox reaction to proton translocation (for every two electrons transferred, four hydrogen ions are translocated across the cytoplasmic membrane), and thus conserves the redox energy in a proton gradient.</text>
</comment>
<comment type="catalytic activity">
    <reaction evidence="1">
        <text>a quinone + NADH + 5 H(+)(in) = a quinol + NAD(+) + 4 H(+)(out)</text>
        <dbReference type="Rhea" id="RHEA:57888"/>
        <dbReference type="ChEBI" id="CHEBI:15378"/>
        <dbReference type="ChEBI" id="CHEBI:24646"/>
        <dbReference type="ChEBI" id="CHEBI:57540"/>
        <dbReference type="ChEBI" id="CHEBI:57945"/>
        <dbReference type="ChEBI" id="CHEBI:132124"/>
    </reaction>
</comment>
<comment type="subunit">
    <text evidence="1">NDH-1 is composed of 14 different subunits. Subunits NuoA, H, J, K, L, M, N constitute the membrane sector of the complex.</text>
</comment>
<comment type="subcellular location">
    <subcellularLocation>
        <location evidence="1">Cell inner membrane</location>
        <topology evidence="1">Multi-pass membrane protein</topology>
    </subcellularLocation>
</comment>
<comment type="similarity">
    <text evidence="1">Belongs to the complex I subunit 4L family.</text>
</comment>
<gene>
    <name evidence="1" type="primary">nuoK1</name>
    <name type="ordered locus">Geob_0472</name>
</gene>
<sequence>MLALNNYLIISAILFSIGTIGVLVRRNAIVIFMCVEMMLNAVNLTFIAFSKYLGNIDGQIFVFFVMTVAAAEAAVGLALMIAFFKNRESIDVEDVNIMKW</sequence>
<accession>B9LZM7</accession>
<dbReference type="EC" id="7.1.1.-" evidence="1"/>
<dbReference type="EMBL" id="CP001390">
    <property type="protein sequence ID" value="ACM18841.1"/>
    <property type="molecule type" value="Genomic_DNA"/>
</dbReference>
<dbReference type="SMR" id="B9LZM7"/>
<dbReference type="STRING" id="316067.Geob_0472"/>
<dbReference type="KEGG" id="geo:Geob_0472"/>
<dbReference type="eggNOG" id="COG0713">
    <property type="taxonomic scope" value="Bacteria"/>
</dbReference>
<dbReference type="HOGENOM" id="CLU_144724_0_0_7"/>
<dbReference type="OrthoDB" id="9810120at2"/>
<dbReference type="Proteomes" id="UP000007721">
    <property type="component" value="Chromosome"/>
</dbReference>
<dbReference type="GO" id="GO:0030964">
    <property type="term" value="C:NADH dehydrogenase complex"/>
    <property type="evidence" value="ECO:0007669"/>
    <property type="project" value="TreeGrafter"/>
</dbReference>
<dbReference type="GO" id="GO:0005886">
    <property type="term" value="C:plasma membrane"/>
    <property type="evidence" value="ECO:0007669"/>
    <property type="project" value="UniProtKB-SubCell"/>
</dbReference>
<dbReference type="GO" id="GO:0050136">
    <property type="term" value="F:NADH:ubiquinone reductase (non-electrogenic) activity"/>
    <property type="evidence" value="ECO:0007669"/>
    <property type="project" value="UniProtKB-UniRule"/>
</dbReference>
<dbReference type="GO" id="GO:0048038">
    <property type="term" value="F:quinone binding"/>
    <property type="evidence" value="ECO:0007669"/>
    <property type="project" value="UniProtKB-KW"/>
</dbReference>
<dbReference type="GO" id="GO:0042773">
    <property type="term" value="P:ATP synthesis coupled electron transport"/>
    <property type="evidence" value="ECO:0007669"/>
    <property type="project" value="InterPro"/>
</dbReference>
<dbReference type="FunFam" id="1.10.287.3510:FF:000001">
    <property type="entry name" value="NADH-quinone oxidoreductase subunit K"/>
    <property type="match status" value="1"/>
</dbReference>
<dbReference type="Gene3D" id="1.10.287.3510">
    <property type="match status" value="1"/>
</dbReference>
<dbReference type="HAMAP" id="MF_01456">
    <property type="entry name" value="NDH1_NuoK"/>
    <property type="match status" value="1"/>
</dbReference>
<dbReference type="InterPro" id="IPR001133">
    <property type="entry name" value="NADH_UbQ_OxRdtase_chain4L/K"/>
</dbReference>
<dbReference type="InterPro" id="IPR039428">
    <property type="entry name" value="NUOK/Mnh_C1-like"/>
</dbReference>
<dbReference type="NCBIfam" id="NF004320">
    <property type="entry name" value="PRK05715.1-2"/>
    <property type="match status" value="1"/>
</dbReference>
<dbReference type="NCBIfam" id="NF004321">
    <property type="entry name" value="PRK05715.1-3"/>
    <property type="match status" value="1"/>
</dbReference>
<dbReference type="NCBIfam" id="NF004323">
    <property type="entry name" value="PRK05715.1-5"/>
    <property type="match status" value="1"/>
</dbReference>
<dbReference type="PANTHER" id="PTHR11434:SF21">
    <property type="entry name" value="NADH DEHYDROGENASE SUBUNIT 4L-RELATED"/>
    <property type="match status" value="1"/>
</dbReference>
<dbReference type="PANTHER" id="PTHR11434">
    <property type="entry name" value="NADH-UBIQUINONE OXIDOREDUCTASE SUBUNIT ND4L"/>
    <property type="match status" value="1"/>
</dbReference>
<dbReference type="Pfam" id="PF00420">
    <property type="entry name" value="Oxidored_q2"/>
    <property type="match status" value="1"/>
</dbReference>
<reference key="1">
    <citation type="submission" date="2009-01" db="EMBL/GenBank/DDBJ databases">
        <title>Complete sequence of Geobacter sp. FRC-32.</title>
        <authorList>
            <consortium name="US DOE Joint Genome Institute"/>
            <person name="Lucas S."/>
            <person name="Copeland A."/>
            <person name="Lapidus A."/>
            <person name="Glavina del Rio T."/>
            <person name="Dalin E."/>
            <person name="Tice H."/>
            <person name="Bruce D."/>
            <person name="Goodwin L."/>
            <person name="Pitluck S."/>
            <person name="Saunders E."/>
            <person name="Brettin T."/>
            <person name="Detter J.C."/>
            <person name="Han C."/>
            <person name="Larimer F."/>
            <person name="Land M."/>
            <person name="Hauser L."/>
            <person name="Kyrpides N."/>
            <person name="Ovchinnikova G."/>
            <person name="Kostka J."/>
            <person name="Richardson P."/>
        </authorList>
    </citation>
    <scope>NUCLEOTIDE SEQUENCE [LARGE SCALE GENOMIC DNA]</scope>
    <source>
        <strain>DSM 22248 / JCM 15807 / FRC-32</strain>
    </source>
</reference>
<protein>
    <recommendedName>
        <fullName evidence="1">NADH-quinone oxidoreductase subunit K 1</fullName>
        <ecNumber evidence="1">7.1.1.-</ecNumber>
    </recommendedName>
    <alternativeName>
        <fullName evidence="1">NADH dehydrogenase I subunit K 1</fullName>
    </alternativeName>
    <alternativeName>
        <fullName evidence="1">NDH-1 subunit K 1</fullName>
    </alternativeName>
</protein>